<feature type="chain" id="PRO_1000212989" description="Bifunctional glutamine synthetase adenylyltransferase/adenylyl-removing enzyme">
    <location>
        <begin position="1"/>
        <end position="990"/>
    </location>
</feature>
<feature type="region of interest" description="Adenylyl removase" evidence="1">
    <location>
        <begin position="1"/>
        <end position="474"/>
    </location>
</feature>
<feature type="region of interest" description="Adenylyl transferase" evidence="1">
    <location>
        <begin position="478"/>
        <end position="990"/>
    </location>
</feature>
<protein>
    <recommendedName>
        <fullName evidence="1">Bifunctional glutamine synthetase adenylyltransferase/adenylyl-removing enzyme</fullName>
    </recommendedName>
    <alternativeName>
        <fullName evidence="1">ATP:glutamine synthetase adenylyltransferase</fullName>
    </alternativeName>
    <alternativeName>
        <fullName evidence="1">ATase</fullName>
    </alternativeName>
    <domain>
        <recommendedName>
            <fullName evidence="1">Glutamine synthetase adenylyl-L-tyrosine phosphorylase</fullName>
            <ecNumber evidence="1">2.7.7.89</ecNumber>
        </recommendedName>
        <alternativeName>
            <fullName evidence="1">Adenylyl removase</fullName>
            <shortName evidence="1">AR</shortName>
            <shortName evidence="1">AT-N</shortName>
        </alternativeName>
    </domain>
    <domain>
        <recommendedName>
            <fullName evidence="1">Glutamine synthetase adenylyl transferase</fullName>
            <ecNumber evidence="1">2.7.7.42</ecNumber>
        </recommendedName>
        <alternativeName>
            <fullName evidence="1">Adenylyl transferase</fullName>
            <shortName evidence="1">AT</shortName>
            <shortName evidence="1">AT-C</shortName>
        </alternativeName>
    </domain>
</protein>
<name>GLNE_RHOPT</name>
<organism>
    <name type="scientific">Rhodopseudomonas palustris (strain TIE-1)</name>
    <dbReference type="NCBI Taxonomy" id="395960"/>
    <lineage>
        <taxon>Bacteria</taxon>
        <taxon>Pseudomonadati</taxon>
        <taxon>Pseudomonadota</taxon>
        <taxon>Alphaproteobacteria</taxon>
        <taxon>Hyphomicrobiales</taxon>
        <taxon>Nitrobacteraceae</taxon>
        <taxon>Rhodopseudomonas</taxon>
    </lineage>
</organism>
<dbReference type="EC" id="2.7.7.89" evidence="1"/>
<dbReference type="EC" id="2.7.7.42" evidence="1"/>
<dbReference type="EMBL" id="CP001096">
    <property type="protein sequence ID" value="ACF00665.1"/>
    <property type="molecule type" value="Genomic_DNA"/>
</dbReference>
<dbReference type="RefSeq" id="WP_012495466.1">
    <property type="nucleotide sequence ID" value="NC_011004.1"/>
</dbReference>
<dbReference type="SMR" id="B3QBR5"/>
<dbReference type="KEGG" id="rpt:Rpal_2144"/>
<dbReference type="HOGENOM" id="CLU_006233_0_0_5"/>
<dbReference type="OrthoDB" id="9759366at2"/>
<dbReference type="Proteomes" id="UP000001725">
    <property type="component" value="Chromosome"/>
</dbReference>
<dbReference type="GO" id="GO:0005829">
    <property type="term" value="C:cytosol"/>
    <property type="evidence" value="ECO:0007669"/>
    <property type="project" value="TreeGrafter"/>
</dbReference>
<dbReference type="GO" id="GO:0008882">
    <property type="term" value="F:[glutamate-ammonia-ligase] adenylyltransferase activity"/>
    <property type="evidence" value="ECO:0007669"/>
    <property type="project" value="UniProtKB-UniRule"/>
</dbReference>
<dbReference type="GO" id="GO:0047388">
    <property type="term" value="F:[glutamine synthetase]-adenylyl-L-tyrosine phosphorylase activity"/>
    <property type="evidence" value="ECO:0007669"/>
    <property type="project" value="UniProtKB-EC"/>
</dbReference>
<dbReference type="GO" id="GO:0005524">
    <property type="term" value="F:ATP binding"/>
    <property type="evidence" value="ECO:0007669"/>
    <property type="project" value="UniProtKB-UniRule"/>
</dbReference>
<dbReference type="GO" id="GO:0000287">
    <property type="term" value="F:magnesium ion binding"/>
    <property type="evidence" value="ECO:0007669"/>
    <property type="project" value="UniProtKB-UniRule"/>
</dbReference>
<dbReference type="GO" id="GO:0000820">
    <property type="term" value="P:regulation of glutamine family amino acid metabolic process"/>
    <property type="evidence" value="ECO:0007669"/>
    <property type="project" value="UniProtKB-UniRule"/>
</dbReference>
<dbReference type="CDD" id="cd05401">
    <property type="entry name" value="NT_GlnE_GlnD_like"/>
    <property type="match status" value="2"/>
</dbReference>
<dbReference type="FunFam" id="1.20.120.330:FF:000028">
    <property type="entry name" value="Bifunctional glutamine synthetase adenylyltransferase/adenylyl-removing enzyme"/>
    <property type="match status" value="1"/>
</dbReference>
<dbReference type="FunFam" id="3.30.460.10:FF:000081">
    <property type="entry name" value="Bifunctional glutamine synthetase adenylyltransferase/adenylyl-removing enzyme"/>
    <property type="match status" value="1"/>
</dbReference>
<dbReference type="Gene3D" id="1.20.120.1510">
    <property type="match status" value="1"/>
</dbReference>
<dbReference type="Gene3D" id="3.30.460.10">
    <property type="entry name" value="Beta Polymerase, domain 2"/>
    <property type="match status" value="2"/>
</dbReference>
<dbReference type="Gene3D" id="1.20.120.330">
    <property type="entry name" value="Nucleotidyltransferases domain 2"/>
    <property type="match status" value="2"/>
</dbReference>
<dbReference type="HAMAP" id="MF_00802">
    <property type="entry name" value="GlnE"/>
    <property type="match status" value="1"/>
</dbReference>
<dbReference type="InterPro" id="IPR023057">
    <property type="entry name" value="GlnE"/>
</dbReference>
<dbReference type="InterPro" id="IPR005190">
    <property type="entry name" value="GlnE_rpt_dom"/>
</dbReference>
<dbReference type="InterPro" id="IPR043519">
    <property type="entry name" value="NT_sf"/>
</dbReference>
<dbReference type="InterPro" id="IPR013546">
    <property type="entry name" value="PII_UdlTrfase/GS_AdlTrfase"/>
</dbReference>
<dbReference type="NCBIfam" id="NF008292">
    <property type="entry name" value="PRK11072.1"/>
    <property type="match status" value="1"/>
</dbReference>
<dbReference type="NCBIfam" id="NF010706">
    <property type="entry name" value="PRK14108.1"/>
    <property type="match status" value="1"/>
</dbReference>
<dbReference type="PANTHER" id="PTHR30621:SF0">
    <property type="entry name" value="BIFUNCTIONAL GLUTAMINE SYNTHETASE ADENYLYLTRANSFERASE_ADENYLYL-REMOVING ENZYME"/>
    <property type="match status" value="1"/>
</dbReference>
<dbReference type="PANTHER" id="PTHR30621">
    <property type="entry name" value="GLUTAMINE SYNTHETASE ADENYLYLTRANSFERASE"/>
    <property type="match status" value="1"/>
</dbReference>
<dbReference type="Pfam" id="PF08335">
    <property type="entry name" value="GlnD_UR_UTase"/>
    <property type="match status" value="2"/>
</dbReference>
<dbReference type="Pfam" id="PF03710">
    <property type="entry name" value="GlnE"/>
    <property type="match status" value="2"/>
</dbReference>
<dbReference type="SUPFAM" id="SSF81301">
    <property type="entry name" value="Nucleotidyltransferase"/>
    <property type="match status" value="2"/>
</dbReference>
<dbReference type="SUPFAM" id="SSF81593">
    <property type="entry name" value="Nucleotidyltransferase substrate binding subunit/domain"/>
    <property type="match status" value="2"/>
</dbReference>
<evidence type="ECO:0000255" key="1">
    <source>
        <dbReference type="HAMAP-Rule" id="MF_00802"/>
    </source>
</evidence>
<proteinExistence type="inferred from homology"/>
<comment type="function">
    <text evidence="1">Involved in the regulation of glutamine synthetase GlnA, a key enzyme in the process to assimilate ammonia. When cellular nitrogen levels are high, the C-terminal adenylyl transferase (AT) inactivates GlnA by covalent transfer of an adenylyl group from ATP to specific tyrosine residue of GlnA, thus reducing its activity. Conversely, when nitrogen levels are low, the N-terminal adenylyl removase (AR) activates GlnA by removing the adenylyl group by phosphorolysis, increasing its activity. The regulatory region of GlnE binds the signal transduction protein PII (GlnB) which indicates the nitrogen status of the cell.</text>
</comment>
<comment type="catalytic activity">
    <reaction evidence="1">
        <text>[glutamine synthetase]-O(4)-(5'-adenylyl)-L-tyrosine + phosphate = [glutamine synthetase]-L-tyrosine + ADP</text>
        <dbReference type="Rhea" id="RHEA:43716"/>
        <dbReference type="Rhea" id="RHEA-COMP:10660"/>
        <dbReference type="Rhea" id="RHEA-COMP:10661"/>
        <dbReference type="ChEBI" id="CHEBI:43474"/>
        <dbReference type="ChEBI" id="CHEBI:46858"/>
        <dbReference type="ChEBI" id="CHEBI:83624"/>
        <dbReference type="ChEBI" id="CHEBI:456216"/>
        <dbReference type="EC" id="2.7.7.89"/>
    </reaction>
</comment>
<comment type="catalytic activity">
    <reaction evidence="1">
        <text>[glutamine synthetase]-L-tyrosine + ATP = [glutamine synthetase]-O(4)-(5'-adenylyl)-L-tyrosine + diphosphate</text>
        <dbReference type="Rhea" id="RHEA:18589"/>
        <dbReference type="Rhea" id="RHEA-COMP:10660"/>
        <dbReference type="Rhea" id="RHEA-COMP:10661"/>
        <dbReference type="ChEBI" id="CHEBI:30616"/>
        <dbReference type="ChEBI" id="CHEBI:33019"/>
        <dbReference type="ChEBI" id="CHEBI:46858"/>
        <dbReference type="ChEBI" id="CHEBI:83624"/>
        <dbReference type="EC" id="2.7.7.42"/>
    </reaction>
</comment>
<comment type="cofactor">
    <cofactor evidence="1">
        <name>Mg(2+)</name>
        <dbReference type="ChEBI" id="CHEBI:18420"/>
    </cofactor>
</comment>
<comment type="similarity">
    <text evidence="1">Belongs to the GlnE family.</text>
</comment>
<keyword id="KW-0067">ATP-binding</keyword>
<keyword id="KW-0460">Magnesium</keyword>
<keyword id="KW-0511">Multifunctional enzyme</keyword>
<keyword id="KW-0547">Nucleotide-binding</keyword>
<keyword id="KW-0548">Nucleotidyltransferase</keyword>
<keyword id="KW-0808">Transferase</keyword>
<gene>
    <name evidence="1" type="primary">glnE</name>
    <name type="ordered locus">Rpal_2144</name>
</gene>
<accession>B3QBR5</accession>
<sequence>MIFSAITADLDNTALAARFGAGPRLYDPVLAAERWAGWLVDLAPEQADAIAALGNAFPDLQIALQSIAEASPYLFDLIRGDPVRLLRVLRGAPEQRLAKLLEDAETFVAAASAEDEVMAALRRLKAEAALLIALCDIGGIWPVMQVTQALTDLAGRSVQMALRFLLRLEAGRGRIVPPNPDCPEQGSGLIVLAMGKMGAGELNYSSDIDLIVFYELDAPTLAPDIEPQPFFVRVTQGLSRILQQRRGDGYVFRVDLRLRPDPASTPVALSTVSALDYYEREGRTWERAAMIKARPCAGDLVAGDALLSEIAPFVWRKHLDFAALSDVHDMKRQMQTYRGQTEIAVEGHNVKVGRGGIREIEFFAQTQQLIAGGRHPELRVRPTLEALEILAARNWITIQARDELTEAYLFLRKVEHRVQMIADEQTHALPDTVEAIERFSRFLGYDSRDSFARDLLGYLERVQGHYAKLFEGDPTGTAKLPPVDYGAGPEDTRLLDHLLSLGYKKPLMIATTLQQWMTGGYRVLKVETTQRAFREFVPALIEELARAEQPDDAVNAFDRLLQALHRGGRLISLLSQNRELLTLVALVLGAAPRLGDMLARQPQILDGLIDPRFFGAMPDQAELSARLAVTLADAGSYEEFLDRLRLFGQESLFLIGTRILSGTVPTQQAAVAFADVAEGIVGTVHGLVSEQFASTYGRVKGQQTAILAMGKLGSREMTASSDLDLILIYDFDDDQPDSDGERSLHGAQYFARFTQRLISAFTTRTNYGVLYDVDMRLRPSGRAGPVASRLDAFAAYQEQEAWTWEHLALTRARVISAPPEFRSRIEQVIRAVLTRPRDAAIIANDVAEMRRAIAQEKGEDDVWDLKYAAGGMVDIDFIAQYLQLVHAHEAPDILHVNTLSALDNATRLGLLAQADAEVLRPAARLYQNLTQILRLCVSEKFNPDTAGDDLLRVMVRAGDAPDFSSLQARVKETQSDVRAIFNRLIGGEDA</sequence>
<reference key="1">
    <citation type="submission" date="2008-05" db="EMBL/GenBank/DDBJ databases">
        <title>Complete sequence of Rhodopseudomonas palustris TIE-1.</title>
        <authorList>
            <consortium name="US DOE Joint Genome Institute"/>
            <person name="Lucas S."/>
            <person name="Copeland A."/>
            <person name="Lapidus A."/>
            <person name="Glavina del Rio T."/>
            <person name="Dalin E."/>
            <person name="Tice H."/>
            <person name="Pitluck S."/>
            <person name="Chain P."/>
            <person name="Malfatti S."/>
            <person name="Shin M."/>
            <person name="Vergez L."/>
            <person name="Lang D."/>
            <person name="Schmutz J."/>
            <person name="Larimer F."/>
            <person name="Land M."/>
            <person name="Hauser L."/>
            <person name="Kyrpides N."/>
            <person name="Mikhailova N."/>
            <person name="Emerson D."/>
            <person name="Newman D.K."/>
            <person name="Roden E."/>
            <person name="Richardson P."/>
        </authorList>
    </citation>
    <scope>NUCLEOTIDE SEQUENCE [LARGE SCALE GENOMIC DNA]</scope>
    <source>
        <strain>TIE-1</strain>
    </source>
</reference>